<protein>
    <recommendedName>
        <fullName evidence="1">Nucleotide-binding protein Bphyt_3208</fullName>
    </recommendedName>
</protein>
<keyword id="KW-0547">Nucleotide-binding</keyword>
<proteinExistence type="inferred from homology"/>
<sequence>MPSFDVVCEANMIEVKNAIEQSNKEISTRFDFKGSDARVEHKENEITAYADDDFKLGQVKDVLLSKMAKRNVDVRFLDHGKIEKIGGDKVKQVIKIKKGVSGDLSKKIVRLVKDSKIKVQASIQGDAVRITGGKRDDLQSVIAMLRKDVTDTPLDFNNFRD</sequence>
<evidence type="ECO:0000255" key="1">
    <source>
        <dbReference type="HAMAP-Rule" id="MF_00632"/>
    </source>
</evidence>
<comment type="function">
    <text evidence="1">Nucleotide-binding protein.</text>
</comment>
<comment type="similarity">
    <text evidence="1">Belongs to the YajQ family.</text>
</comment>
<reference key="1">
    <citation type="journal article" date="2011" name="J. Bacteriol.">
        <title>Complete genome sequence of the plant growth-promoting endophyte Burkholderia phytofirmans strain PsJN.</title>
        <authorList>
            <person name="Weilharter A."/>
            <person name="Mitter B."/>
            <person name="Shin M.V."/>
            <person name="Chain P.S."/>
            <person name="Nowak J."/>
            <person name="Sessitsch A."/>
        </authorList>
    </citation>
    <scope>NUCLEOTIDE SEQUENCE [LARGE SCALE GENOMIC DNA]</scope>
    <source>
        <strain>DSM 17436 / LMG 22146 / PsJN</strain>
    </source>
</reference>
<organism>
    <name type="scientific">Paraburkholderia phytofirmans (strain DSM 17436 / LMG 22146 / PsJN)</name>
    <name type="common">Burkholderia phytofirmans</name>
    <dbReference type="NCBI Taxonomy" id="398527"/>
    <lineage>
        <taxon>Bacteria</taxon>
        <taxon>Pseudomonadati</taxon>
        <taxon>Pseudomonadota</taxon>
        <taxon>Betaproteobacteria</taxon>
        <taxon>Burkholderiales</taxon>
        <taxon>Burkholderiaceae</taxon>
        <taxon>Paraburkholderia</taxon>
    </lineage>
</organism>
<accession>B2SY65</accession>
<feature type="chain" id="PRO_1000130609" description="Nucleotide-binding protein Bphyt_3208">
    <location>
        <begin position="1"/>
        <end position="161"/>
    </location>
</feature>
<dbReference type="EMBL" id="CP001052">
    <property type="protein sequence ID" value="ACD17600.1"/>
    <property type="molecule type" value="Genomic_DNA"/>
</dbReference>
<dbReference type="RefSeq" id="WP_012434170.1">
    <property type="nucleotide sequence ID" value="NC_010681.1"/>
</dbReference>
<dbReference type="SMR" id="B2SY65"/>
<dbReference type="STRING" id="398527.Bphyt_3208"/>
<dbReference type="KEGG" id="bpy:Bphyt_3208"/>
<dbReference type="eggNOG" id="COG1666">
    <property type="taxonomic scope" value="Bacteria"/>
</dbReference>
<dbReference type="HOGENOM" id="CLU_099839_1_0_4"/>
<dbReference type="OrthoDB" id="9801447at2"/>
<dbReference type="Proteomes" id="UP000001739">
    <property type="component" value="Chromosome 1"/>
</dbReference>
<dbReference type="GO" id="GO:0005829">
    <property type="term" value="C:cytosol"/>
    <property type="evidence" value="ECO:0007669"/>
    <property type="project" value="TreeGrafter"/>
</dbReference>
<dbReference type="GO" id="GO:0000166">
    <property type="term" value="F:nucleotide binding"/>
    <property type="evidence" value="ECO:0007669"/>
    <property type="project" value="TreeGrafter"/>
</dbReference>
<dbReference type="CDD" id="cd11740">
    <property type="entry name" value="YajQ_like"/>
    <property type="match status" value="1"/>
</dbReference>
<dbReference type="Gene3D" id="3.30.70.990">
    <property type="entry name" value="YajQ-like, domain 2"/>
    <property type="match status" value="1"/>
</dbReference>
<dbReference type="HAMAP" id="MF_00632">
    <property type="entry name" value="YajQ"/>
    <property type="match status" value="1"/>
</dbReference>
<dbReference type="InterPro" id="IPR007551">
    <property type="entry name" value="DUF520"/>
</dbReference>
<dbReference type="InterPro" id="IPR035570">
    <property type="entry name" value="UPF0234_N"/>
</dbReference>
<dbReference type="InterPro" id="IPR036183">
    <property type="entry name" value="YajQ-like_sf"/>
</dbReference>
<dbReference type="NCBIfam" id="NF003819">
    <property type="entry name" value="PRK05412.1"/>
    <property type="match status" value="1"/>
</dbReference>
<dbReference type="PANTHER" id="PTHR30476">
    <property type="entry name" value="UPF0234 PROTEIN YAJQ"/>
    <property type="match status" value="1"/>
</dbReference>
<dbReference type="PANTHER" id="PTHR30476:SF0">
    <property type="entry name" value="UPF0234 PROTEIN YAJQ"/>
    <property type="match status" value="1"/>
</dbReference>
<dbReference type="Pfam" id="PF04461">
    <property type="entry name" value="DUF520"/>
    <property type="match status" value="1"/>
</dbReference>
<dbReference type="SUPFAM" id="SSF89963">
    <property type="entry name" value="YajQ-like"/>
    <property type="match status" value="2"/>
</dbReference>
<gene>
    <name type="ordered locus">Bphyt_3208</name>
</gene>
<name>Y3208_PARPJ</name>